<dbReference type="EMBL" id="U00090">
    <property type="protein sequence ID" value="AAB91960.1"/>
    <property type="molecule type" value="Genomic_DNA"/>
</dbReference>
<dbReference type="RefSeq" id="NP_444173.1">
    <property type="nucleotide sequence ID" value="NC_000914.2"/>
</dbReference>
<dbReference type="KEGG" id="rhi:NGR_a00500"/>
<dbReference type="PATRIC" id="fig|394.7.peg.49"/>
<dbReference type="eggNOG" id="COG3385">
    <property type="taxonomic scope" value="Bacteria"/>
</dbReference>
<dbReference type="HOGENOM" id="CLU_043140_0_0_5"/>
<dbReference type="OrthoDB" id="7327264at2"/>
<dbReference type="Proteomes" id="UP000001054">
    <property type="component" value="Plasmid pNGR234a"/>
</dbReference>
<dbReference type="GO" id="GO:0003677">
    <property type="term" value="F:DNA binding"/>
    <property type="evidence" value="ECO:0007669"/>
    <property type="project" value="UniProtKB-KW"/>
</dbReference>
<dbReference type="GO" id="GO:0004803">
    <property type="term" value="F:transposase activity"/>
    <property type="evidence" value="ECO:0007669"/>
    <property type="project" value="InterPro"/>
</dbReference>
<dbReference type="GO" id="GO:0006313">
    <property type="term" value="P:DNA transposition"/>
    <property type="evidence" value="ECO:0007669"/>
    <property type="project" value="InterPro"/>
</dbReference>
<dbReference type="InterPro" id="IPR012337">
    <property type="entry name" value="RNaseH-like_sf"/>
</dbReference>
<dbReference type="InterPro" id="IPR047952">
    <property type="entry name" value="Transpos_IS4"/>
</dbReference>
<dbReference type="InterPro" id="IPR002559">
    <property type="entry name" value="Transposase_11"/>
</dbReference>
<dbReference type="NCBIfam" id="NF033592">
    <property type="entry name" value="transpos_IS4_1"/>
    <property type="match status" value="1"/>
</dbReference>
<dbReference type="PANTHER" id="PTHR33258">
    <property type="entry name" value="TRANSPOSASE INSL FOR INSERTION SEQUENCE ELEMENT IS186A-RELATED"/>
    <property type="match status" value="1"/>
</dbReference>
<dbReference type="PANTHER" id="PTHR33258:SF1">
    <property type="entry name" value="TRANSPOSASE INSL FOR INSERTION SEQUENCE ELEMENT IS186A-RELATED"/>
    <property type="match status" value="1"/>
</dbReference>
<dbReference type="Pfam" id="PF01609">
    <property type="entry name" value="DDE_Tnp_1"/>
    <property type="match status" value="1"/>
</dbReference>
<dbReference type="SUPFAM" id="SSF53098">
    <property type="entry name" value="Ribonuclease H-like"/>
    <property type="match status" value="1"/>
</dbReference>
<comment type="similarity">
    <text evidence="2">Belongs to the transposase 11 family.</text>
</comment>
<reference key="1">
    <citation type="journal article" date="1997" name="Nature">
        <title>Molecular basis of symbiosis between Rhizobium and legumes.</title>
        <authorList>
            <person name="Freiberg C.A."/>
            <person name="Fellay R."/>
            <person name="Bairoch A."/>
            <person name="Broughton W.J."/>
            <person name="Rosenthal A."/>
            <person name="Perret X."/>
        </authorList>
    </citation>
    <scope>NUCLEOTIDE SEQUENCE [LARGE SCALE GENOMIC DNA]</scope>
    <source>
        <strain>NBRC 101917 / NGR234</strain>
    </source>
</reference>
<reference key="2">
    <citation type="journal article" date="2009" name="Appl. Environ. Microbiol.">
        <title>Rhizobium sp. strain NGR234 possesses a remarkable number of secretion systems.</title>
        <authorList>
            <person name="Schmeisser C."/>
            <person name="Liesegang H."/>
            <person name="Krysciak D."/>
            <person name="Bakkou N."/>
            <person name="Le Quere A."/>
            <person name="Wollherr A."/>
            <person name="Heinemeyer I."/>
            <person name="Morgenstern B."/>
            <person name="Pommerening-Roeser A."/>
            <person name="Flores M."/>
            <person name="Palacios R."/>
            <person name="Brenner S."/>
            <person name="Gottschalk G."/>
            <person name="Schmitz R.A."/>
            <person name="Broughton W.J."/>
            <person name="Perret X."/>
            <person name="Strittmatter A.W."/>
            <person name="Streit W.R."/>
        </authorList>
    </citation>
    <scope>NUCLEOTIDE SEQUENCE [LARGE SCALE GENOMIC DNA]</scope>
    <source>
        <strain>NBRC 101917 / NGR234</strain>
    </source>
</reference>
<sequence length="356" mass="39775">MITTGTPTTRRSAAGTAGADLCPVERCGEPARPGGRLERQQPSPLSPGQRPLADANARRPVAVFAETFGLLAGQLDRQTRREGRAMLRLIDSTPIPLGKLCGWAKSNGRIRGMKMHVVYDPDSDCPRLLDITDANVNDAQIGRTIAIESGATYIFDKGYCHYGWWTAIAEAKAFFVTRPKSNMGLKVVRQRRIKVAEGDGFTVIDDATVRLASKGDSKLPIPLRRLTVKRADGDTITLLTNDRKRPAVAIAALYKGRWQIELLFRWIKQHLKIRSFLGNNDNAVRLQLFAAMIAYALLRIAARLNRITMPILRFTDLVIRCLFERRDIAAIERPPPVNPSHRRPRCSPHQMSFAYV</sequence>
<name>Y4ZB_SINFN</name>
<gene>
    <name type="ordered locus">NGR_a00500</name>
    <name type="ORF">y4zB</name>
</gene>
<protein>
    <recommendedName>
        <fullName>Putative transposase y4zB</fullName>
    </recommendedName>
</protein>
<organism>
    <name type="scientific">Sinorhizobium fredii (strain NBRC 101917 / NGR234)</name>
    <dbReference type="NCBI Taxonomy" id="394"/>
    <lineage>
        <taxon>Bacteria</taxon>
        <taxon>Pseudomonadati</taxon>
        <taxon>Pseudomonadota</taxon>
        <taxon>Alphaproteobacteria</taxon>
        <taxon>Hyphomicrobiales</taxon>
        <taxon>Rhizobiaceae</taxon>
        <taxon>Sinorhizobium/Ensifer group</taxon>
        <taxon>Sinorhizobium</taxon>
    </lineage>
</organism>
<geneLocation type="plasmid">
    <name>sym pNGR234a</name>
</geneLocation>
<feature type="chain" id="PRO_0000173302" description="Putative transposase y4zB">
    <location>
        <begin position="1"/>
        <end position="356"/>
    </location>
</feature>
<feature type="region of interest" description="Disordered" evidence="1">
    <location>
        <begin position="1"/>
        <end position="54"/>
    </location>
</feature>
<feature type="region of interest" description="Disordered" evidence="1">
    <location>
        <begin position="334"/>
        <end position="356"/>
    </location>
</feature>
<feature type="compositionally biased region" description="Low complexity" evidence="1">
    <location>
        <begin position="1"/>
        <end position="19"/>
    </location>
</feature>
<proteinExistence type="inferred from homology"/>
<keyword id="KW-0233">DNA recombination</keyword>
<keyword id="KW-0238">DNA-binding</keyword>
<keyword id="KW-0614">Plasmid</keyword>
<keyword id="KW-1185">Reference proteome</keyword>
<keyword id="KW-0814">Transposable element</keyword>
<keyword id="KW-0815">Transposition</keyword>
<evidence type="ECO:0000256" key="1">
    <source>
        <dbReference type="SAM" id="MobiDB-lite"/>
    </source>
</evidence>
<evidence type="ECO:0000305" key="2"/>
<accession>P55729</accession>